<evidence type="ECO:0000255" key="1">
    <source>
        <dbReference type="PROSITE-ProRule" id="PRU00497"/>
    </source>
</evidence>
<evidence type="ECO:0000256" key="2">
    <source>
        <dbReference type="SAM" id="MobiDB-lite"/>
    </source>
</evidence>
<evidence type="ECO:0000269" key="3">
    <source>
    </source>
</evidence>
<dbReference type="PIR" id="S78093">
    <property type="entry name" value="S78093"/>
</dbReference>
<dbReference type="OrthoDB" id="6620560at2759"/>
<dbReference type="GO" id="GO:0062129">
    <property type="term" value="C:chitin-based extracellular matrix"/>
    <property type="evidence" value="ECO:0007669"/>
    <property type="project" value="TreeGrafter"/>
</dbReference>
<dbReference type="GO" id="GO:0008010">
    <property type="term" value="F:structural constituent of chitin-based larval cuticle"/>
    <property type="evidence" value="ECO:0007669"/>
    <property type="project" value="TreeGrafter"/>
</dbReference>
<dbReference type="InterPro" id="IPR050468">
    <property type="entry name" value="Cuticle_Struct_Prot"/>
</dbReference>
<dbReference type="InterPro" id="IPR000618">
    <property type="entry name" value="Insect_cuticle"/>
</dbReference>
<dbReference type="PANTHER" id="PTHR10380">
    <property type="entry name" value="CUTICLE PROTEIN"/>
    <property type="match status" value="1"/>
</dbReference>
<dbReference type="PANTHER" id="PTHR10380:SF229">
    <property type="entry name" value="CUTICULAR PROTEIN 49AF, ISOFORM A"/>
    <property type="match status" value="1"/>
</dbReference>
<dbReference type="Pfam" id="PF00379">
    <property type="entry name" value="Chitin_bind_4"/>
    <property type="match status" value="1"/>
</dbReference>
<dbReference type="PRINTS" id="PR00947">
    <property type="entry name" value="CUTICLE"/>
</dbReference>
<dbReference type="PROSITE" id="PS51155">
    <property type="entry name" value="CHIT_BIND_RR_2"/>
    <property type="match status" value="1"/>
</dbReference>
<proteinExistence type="evidence at protein level"/>
<comment type="function">
    <text>Component of the abdominal endocuticle.</text>
</comment>
<keyword id="KW-0193">Cuticle</keyword>
<keyword id="KW-0903">Direct protein sequencing</keyword>
<keyword id="KW-0325">Glycoprotein</keyword>
<keyword id="KW-0873">Pyrrolidone carboxylic acid</keyword>
<name>CUD3_SCHGR</name>
<reference key="1">
    <citation type="journal article" date="1998" name="Insect Biochem. Mol. Biol.">
        <title>Amino acid sequence studies on endocuticular proteins from the desert locust, Schistocerca gregaria.</title>
        <authorList>
            <person name="Andersen S.O."/>
        </authorList>
    </citation>
    <scope>PROTEIN SEQUENCE</scope>
    <scope>PYROGLUTAMATE FORMATION AT GLN-1</scope>
    <scope>POST-TRANSLATIONAL MODIFICATIONS</scope>
    <source>
        <strain>Albino</strain>
        <tissue>Cuticle</tissue>
    </source>
</reference>
<feature type="chain" id="PRO_0000196120" description="Endocuticle structural glycoprotein SgAbd-3">
    <location>
        <begin position="1"/>
        <end position="119"/>
    </location>
</feature>
<feature type="domain" description="Chitin-binding type R&amp;R" evidence="1">
    <location>
        <begin position="24"/>
        <end position="98"/>
    </location>
</feature>
<feature type="region of interest" description="Disordered" evidence="2">
    <location>
        <begin position="33"/>
        <end position="55"/>
    </location>
</feature>
<feature type="modified residue" description="Pyrrolidone carboxylic acid" evidence="3">
    <location>
        <position position="1"/>
    </location>
</feature>
<feature type="glycosylation site" description="O-linked (HexNAc...) threonine">
    <location>
        <position position="96"/>
    </location>
</feature>
<organism>
    <name type="scientific">Schistocerca gregaria</name>
    <name type="common">Desert locust</name>
    <name type="synonym">Gryllus gregarius</name>
    <dbReference type="NCBI Taxonomy" id="7010"/>
    <lineage>
        <taxon>Eukaryota</taxon>
        <taxon>Metazoa</taxon>
        <taxon>Ecdysozoa</taxon>
        <taxon>Arthropoda</taxon>
        <taxon>Hexapoda</taxon>
        <taxon>Insecta</taxon>
        <taxon>Pterygota</taxon>
        <taxon>Neoptera</taxon>
        <taxon>Polyneoptera</taxon>
        <taxon>Orthoptera</taxon>
        <taxon>Caelifera</taxon>
        <taxon>Acrididea</taxon>
        <taxon>Acridomorpha</taxon>
        <taxon>Acridoidea</taxon>
        <taxon>Acrididae</taxon>
        <taxon>Cyrtacanthacridinae</taxon>
        <taxon>Schistocerca</taxon>
    </lineage>
</organism>
<accession>Q7M4E9</accession>
<protein>
    <recommendedName>
        <fullName>Endocuticle structural glycoprotein SgAbd-3</fullName>
    </recommendedName>
</protein>
<sequence length="119" mass="12532">QRPVAGGRGKDAVIVSATNDVNFDGSYRYSFETSDGQRASQEGALKQVSAPGPDGDTLGEAVRGDFSYTDDAGNQFAIQYTADENGYVPQGAHLPTPPPIPEAIQKALAYIASQPQARS</sequence>